<protein>
    <recommendedName>
        <fullName>F-box protein At1g10110</fullName>
    </recommendedName>
</protein>
<gene>
    <name type="ordered locus">At1g10110</name>
    <name type="ORF">T27I1.14</name>
</gene>
<sequence>MATDDDGTPNWSELVTDILSLVFKHLSFTDFARAKTVCSSWYFASKSSSPRKNHTPWLILYQDTHWLMFNSDEEKFYRTVYLGRFAECRGVASCGSWVLVFDKEINFYIINPFTPQLIRLPPLEYSNTGTKFERPGNYVFHLLFDDRHRTSRAIVGNSVLWVDEKTKDYLVVWSYKEAFVPSPYIYYCSKRGQEWFEIPASTCGKLFRCLDMAYKDEKLYILTSNGSIRILDFSLGDLPRQIDNHPYSHRPFVTEFPNHKMGMRLTTSGDVVMIQCVTTGTHKRSPFRIFKLSSITETKESSHEVVGWETVHSFEDEESLVWDLSVTLPTKGVSGIKKDSIYYCHTSLSSSIRETCAYEIPTHKITAYDIPKQDIKPIRHRGILIGEARWFVPCFGAGE</sequence>
<dbReference type="EMBL" id="AC004122">
    <property type="protein sequence ID" value="AAC34337.1"/>
    <property type="molecule type" value="Genomic_DNA"/>
</dbReference>
<dbReference type="EMBL" id="CP002684">
    <property type="protein sequence ID" value="AEE28543.2"/>
    <property type="molecule type" value="Genomic_DNA"/>
</dbReference>
<dbReference type="EMBL" id="BT011857">
    <property type="status" value="NOT_ANNOTATED_CDS"/>
    <property type="molecule type" value="mRNA"/>
</dbReference>
<dbReference type="EMBL" id="BT033089">
    <property type="protein sequence ID" value="ACF04812.1"/>
    <property type="molecule type" value="mRNA"/>
</dbReference>
<dbReference type="PIR" id="T00631">
    <property type="entry name" value="T00631"/>
</dbReference>
<dbReference type="RefSeq" id="NP_172482.3">
    <property type="nucleotide sequence ID" value="NM_100885.4"/>
</dbReference>
<dbReference type="FunCoup" id="O80603">
    <property type="interactions" value="192"/>
</dbReference>
<dbReference type="STRING" id="3702.O80603"/>
<dbReference type="PaxDb" id="3702-AT1G10110.1"/>
<dbReference type="DNASU" id="837548"/>
<dbReference type="EnsemblPlants" id="AT1G10110.1">
    <property type="protein sequence ID" value="AT1G10110.1"/>
    <property type="gene ID" value="AT1G10110"/>
</dbReference>
<dbReference type="GeneID" id="837548"/>
<dbReference type="Gramene" id="AT1G10110.1">
    <property type="protein sequence ID" value="AT1G10110.1"/>
    <property type="gene ID" value="AT1G10110"/>
</dbReference>
<dbReference type="KEGG" id="ath:AT1G10110"/>
<dbReference type="Araport" id="AT1G10110"/>
<dbReference type="TAIR" id="AT1G10110">
    <property type="gene designation" value="ATFDB1"/>
</dbReference>
<dbReference type="HOGENOM" id="CLU_019286_7_1_1"/>
<dbReference type="InParanoid" id="O80603"/>
<dbReference type="OMA" id="ETCAYEI"/>
<dbReference type="PhylomeDB" id="O80603"/>
<dbReference type="PRO" id="PR:O80603"/>
<dbReference type="Proteomes" id="UP000006548">
    <property type="component" value="Chromosome 1"/>
</dbReference>
<dbReference type="ExpressionAtlas" id="O80603">
    <property type="expression patterns" value="baseline and differential"/>
</dbReference>
<dbReference type="Gene3D" id="1.20.1280.50">
    <property type="match status" value="1"/>
</dbReference>
<dbReference type="InterPro" id="IPR036047">
    <property type="entry name" value="F-box-like_dom_sf"/>
</dbReference>
<dbReference type="InterPro" id="IPR050942">
    <property type="entry name" value="F-box_BR-signaling"/>
</dbReference>
<dbReference type="InterPro" id="IPR001810">
    <property type="entry name" value="F-box_dom"/>
</dbReference>
<dbReference type="InterPro" id="IPR005174">
    <property type="entry name" value="KIB1-4_b-propeller"/>
</dbReference>
<dbReference type="InterPro" id="IPR011044">
    <property type="entry name" value="Quino_amine_DH_bsu"/>
</dbReference>
<dbReference type="PANTHER" id="PTHR44259:SF15">
    <property type="entry name" value="F-BOX PROTEIN KIB2-RELATED"/>
    <property type="match status" value="1"/>
</dbReference>
<dbReference type="PANTHER" id="PTHR44259">
    <property type="entry name" value="OS07G0183000 PROTEIN-RELATED"/>
    <property type="match status" value="1"/>
</dbReference>
<dbReference type="Pfam" id="PF03478">
    <property type="entry name" value="Beta-prop_KIB1-4"/>
    <property type="match status" value="1"/>
</dbReference>
<dbReference type="Pfam" id="PF00646">
    <property type="entry name" value="F-box"/>
    <property type="match status" value="1"/>
</dbReference>
<dbReference type="SMART" id="SM00256">
    <property type="entry name" value="FBOX"/>
    <property type="match status" value="1"/>
</dbReference>
<dbReference type="SUPFAM" id="SSF81383">
    <property type="entry name" value="F-box domain"/>
    <property type="match status" value="1"/>
</dbReference>
<dbReference type="SUPFAM" id="SSF50969">
    <property type="entry name" value="YVTN repeat-like/Quinoprotein amine dehydrogenase"/>
    <property type="match status" value="1"/>
</dbReference>
<keyword id="KW-1185">Reference proteome</keyword>
<name>FB1_ARATH</name>
<proteinExistence type="evidence at transcript level"/>
<accession>O80603</accession>
<accession>B3LFA1</accession>
<reference key="1">
    <citation type="journal article" date="2000" name="Nature">
        <title>Sequence and analysis of chromosome 1 of the plant Arabidopsis thaliana.</title>
        <authorList>
            <person name="Theologis A."/>
            <person name="Ecker J.R."/>
            <person name="Palm C.J."/>
            <person name="Federspiel N.A."/>
            <person name="Kaul S."/>
            <person name="White O."/>
            <person name="Alonso J."/>
            <person name="Altafi H."/>
            <person name="Araujo R."/>
            <person name="Bowman C.L."/>
            <person name="Brooks S.Y."/>
            <person name="Buehler E."/>
            <person name="Chan A."/>
            <person name="Chao Q."/>
            <person name="Chen H."/>
            <person name="Cheuk R.F."/>
            <person name="Chin C.W."/>
            <person name="Chung M.K."/>
            <person name="Conn L."/>
            <person name="Conway A.B."/>
            <person name="Conway A.R."/>
            <person name="Creasy T.H."/>
            <person name="Dewar K."/>
            <person name="Dunn P."/>
            <person name="Etgu P."/>
            <person name="Feldblyum T.V."/>
            <person name="Feng J.-D."/>
            <person name="Fong B."/>
            <person name="Fujii C.Y."/>
            <person name="Gill J.E."/>
            <person name="Goldsmith A.D."/>
            <person name="Haas B."/>
            <person name="Hansen N.F."/>
            <person name="Hughes B."/>
            <person name="Huizar L."/>
            <person name="Hunter J.L."/>
            <person name="Jenkins J."/>
            <person name="Johnson-Hopson C."/>
            <person name="Khan S."/>
            <person name="Khaykin E."/>
            <person name="Kim C.J."/>
            <person name="Koo H.L."/>
            <person name="Kremenetskaia I."/>
            <person name="Kurtz D.B."/>
            <person name="Kwan A."/>
            <person name="Lam B."/>
            <person name="Langin-Hooper S."/>
            <person name="Lee A."/>
            <person name="Lee J.M."/>
            <person name="Lenz C.A."/>
            <person name="Li J.H."/>
            <person name="Li Y.-P."/>
            <person name="Lin X."/>
            <person name="Liu S.X."/>
            <person name="Liu Z.A."/>
            <person name="Luros J.S."/>
            <person name="Maiti R."/>
            <person name="Marziali A."/>
            <person name="Militscher J."/>
            <person name="Miranda M."/>
            <person name="Nguyen M."/>
            <person name="Nierman W.C."/>
            <person name="Osborne B.I."/>
            <person name="Pai G."/>
            <person name="Peterson J."/>
            <person name="Pham P.K."/>
            <person name="Rizzo M."/>
            <person name="Rooney T."/>
            <person name="Rowley D."/>
            <person name="Sakano H."/>
            <person name="Salzberg S.L."/>
            <person name="Schwartz J.R."/>
            <person name="Shinn P."/>
            <person name="Southwick A.M."/>
            <person name="Sun H."/>
            <person name="Tallon L.J."/>
            <person name="Tambunga G."/>
            <person name="Toriumi M.J."/>
            <person name="Town C.D."/>
            <person name="Utterback T."/>
            <person name="Van Aken S."/>
            <person name="Vaysberg M."/>
            <person name="Vysotskaia V.S."/>
            <person name="Walker M."/>
            <person name="Wu D."/>
            <person name="Yu G."/>
            <person name="Fraser C.M."/>
            <person name="Venter J.C."/>
            <person name="Davis R.W."/>
        </authorList>
    </citation>
    <scope>NUCLEOTIDE SEQUENCE [LARGE SCALE GENOMIC DNA]</scope>
    <source>
        <strain>cv. Columbia</strain>
    </source>
</reference>
<reference key="2">
    <citation type="journal article" date="2017" name="Plant J.">
        <title>Araport11: a complete reannotation of the Arabidopsis thaliana reference genome.</title>
        <authorList>
            <person name="Cheng C.Y."/>
            <person name="Krishnakumar V."/>
            <person name="Chan A.P."/>
            <person name="Thibaud-Nissen F."/>
            <person name="Schobel S."/>
            <person name="Town C.D."/>
        </authorList>
    </citation>
    <scope>GENOME REANNOTATION</scope>
    <source>
        <strain>cv. Columbia</strain>
    </source>
</reference>
<reference key="3">
    <citation type="submission" date="2004-03" db="EMBL/GenBank/DDBJ databases">
        <authorList>
            <consortium name="Center for eukaryotic structural genomics (CESG)"/>
        </authorList>
    </citation>
    <scope>NUCLEOTIDE SEQUENCE [LARGE SCALE MRNA] OF 2-399</scope>
</reference>
<reference key="4">
    <citation type="submission" date="2008-06" db="EMBL/GenBank/DDBJ databases">
        <title>Arabidopsis ORF clones.</title>
        <authorList>
            <person name="de los Reyes C."/>
            <person name="Quan R."/>
            <person name="Chen H."/>
            <person name="Bautista V."/>
            <person name="Kim C.J."/>
            <person name="Ecker J.R."/>
        </authorList>
    </citation>
    <scope>NUCLEOTIDE SEQUENCE [LARGE SCALE MRNA] OF 68-399</scope>
</reference>
<organism>
    <name type="scientific">Arabidopsis thaliana</name>
    <name type="common">Mouse-ear cress</name>
    <dbReference type="NCBI Taxonomy" id="3702"/>
    <lineage>
        <taxon>Eukaryota</taxon>
        <taxon>Viridiplantae</taxon>
        <taxon>Streptophyta</taxon>
        <taxon>Embryophyta</taxon>
        <taxon>Tracheophyta</taxon>
        <taxon>Spermatophyta</taxon>
        <taxon>Magnoliopsida</taxon>
        <taxon>eudicotyledons</taxon>
        <taxon>Gunneridae</taxon>
        <taxon>Pentapetalae</taxon>
        <taxon>rosids</taxon>
        <taxon>malvids</taxon>
        <taxon>Brassicales</taxon>
        <taxon>Brassicaceae</taxon>
        <taxon>Camelineae</taxon>
        <taxon>Arabidopsis</taxon>
    </lineage>
</organism>
<feature type="chain" id="PRO_0000283280" description="F-box protein At1g10110">
    <location>
        <begin position="1"/>
        <end position="399"/>
    </location>
</feature>
<feature type="domain" description="F-box">
    <location>
        <begin position="9"/>
        <end position="56"/>
    </location>
</feature>
<feature type="sequence conflict" description="In Ref. 3; BT011857." evidence="1" ref="3">
    <original>D</original>
    <variation>N</variation>
    <location>
        <position position="72"/>
    </location>
</feature>
<evidence type="ECO:0000305" key="1"/>